<keyword id="KW-0963">Cytoplasm</keyword>
<keyword id="KW-1185">Reference proteome</keyword>
<keyword id="KW-0690">Ribosome biogenesis</keyword>
<name>RIMP_MYCTO</name>
<sequence length="183" mass="19565">MTTGLPSQRQVIELLGADFACAGYEIEDVVIDARARPPRIAVIADGDAPLDLDTIAALSRRASALLDGLDGANKIRGRYLLEVSSPGVERPLTSEKHFRRARGRKVELVLSDGSRLTGRVGEMRAGTVALVIREDRGWAVREIPLAEIVKAVVQVEFSPPAPAELELAQSSEMGLARGTEAGA</sequence>
<comment type="function">
    <text evidence="1">Required for maturation of 30S ribosomal subunits.</text>
</comment>
<comment type="subcellular location">
    <subcellularLocation>
        <location evidence="1">Cytoplasm</location>
    </subcellularLocation>
</comment>
<comment type="similarity">
    <text evidence="1">Belongs to the RimP family.</text>
</comment>
<feature type="chain" id="PRO_0000428265" description="Ribosome maturation factor RimP">
    <location>
        <begin position="1"/>
        <end position="183"/>
    </location>
</feature>
<dbReference type="EMBL" id="AE000516">
    <property type="protein sequence ID" value="AAK47234.1"/>
    <property type="molecule type" value="Genomic_DNA"/>
</dbReference>
<dbReference type="PIR" id="E70588">
    <property type="entry name" value="E70588"/>
</dbReference>
<dbReference type="RefSeq" id="WP_003899507.1">
    <property type="nucleotide sequence ID" value="NZ_KK341227.1"/>
</dbReference>
<dbReference type="SMR" id="P9WH16"/>
<dbReference type="GeneID" id="45426829"/>
<dbReference type="KEGG" id="mtc:MT2908"/>
<dbReference type="PATRIC" id="fig|83331.31.peg.3142"/>
<dbReference type="HOGENOM" id="CLU_070525_3_0_11"/>
<dbReference type="Proteomes" id="UP000001020">
    <property type="component" value="Chromosome"/>
</dbReference>
<dbReference type="GO" id="GO:0005829">
    <property type="term" value="C:cytosol"/>
    <property type="evidence" value="ECO:0007669"/>
    <property type="project" value="TreeGrafter"/>
</dbReference>
<dbReference type="GO" id="GO:0000028">
    <property type="term" value="P:ribosomal small subunit assembly"/>
    <property type="evidence" value="ECO:0007669"/>
    <property type="project" value="TreeGrafter"/>
</dbReference>
<dbReference type="GO" id="GO:0006412">
    <property type="term" value="P:translation"/>
    <property type="evidence" value="ECO:0007669"/>
    <property type="project" value="TreeGrafter"/>
</dbReference>
<dbReference type="CDD" id="cd01734">
    <property type="entry name" value="YlxS_C"/>
    <property type="match status" value="1"/>
</dbReference>
<dbReference type="Gene3D" id="3.30.300.70">
    <property type="entry name" value="RimP-like superfamily, N-terminal"/>
    <property type="match status" value="1"/>
</dbReference>
<dbReference type="HAMAP" id="MF_01077">
    <property type="entry name" value="RimP"/>
    <property type="match status" value="1"/>
</dbReference>
<dbReference type="InterPro" id="IPR003728">
    <property type="entry name" value="Ribosome_maturation_RimP"/>
</dbReference>
<dbReference type="InterPro" id="IPR028998">
    <property type="entry name" value="RimP_C"/>
</dbReference>
<dbReference type="InterPro" id="IPR036847">
    <property type="entry name" value="RimP_C_sf"/>
</dbReference>
<dbReference type="InterPro" id="IPR028989">
    <property type="entry name" value="RimP_N"/>
</dbReference>
<dbReference type="InterPro" id="IPR035956">
    <property type="entry name" value="RimP_N_sf"/>
</dbReference>
<dbReference type="NCBIfam" id="NF000930">
    <property type="entry name" value="PRK00092.2-2"/>
    <property type="match status" value="1"/>
</dbReference>
<dbReference type="PANTHER" id="PTHR33867">
    <property type="entry name" value="RIBOSOME MATURATION FACTOR RIMP"/>
    <property type="match status" value="1"/>
</dbReference>
<dbReference type="PANTHER" id="PTHR33867:SF1">
    <property type="entry name" value="RIBOSOME MATURATION FACTOR RIMP"/>
    <property type="match status" value="1"/>
</dbReference>
<dbReference type="Pfam" id="PF17384">
    <property type="entry name" value="DUF150_C"/>
    <property type="match status" value="1"/>
</dbReference>
<dbReference type="Pfam" id="PF02576">
    <property type="entry name" value="RimP_N"/>
    <property type="match status" value="1"/>
</dbReference>
<dbReference type="SUPFAM" id="SSF74942">
    <property type="entry name" value="YhbC-like, C-terminal domain"/>
    <property type="match status" value="1"/>
</dbReference>
<dbReference type="SUPFAM" id="SSF75420">
    <property type="entry name" value="YhbC-like, N-terminal domain"/>
    <property type="match status" value="1"/>
</dbReference>
<evidence type="ECO:0000255" key="1">
    <source>
        <dbReference type="HAMAP-Rule" id="MF_01077"/>
    </source>
</evidence>
<organism>
    <name type="scientific">Mycobacterium tuberculosis (strain CDC 1551 / Oshkosh)</name>
    <dbReference type="NCBI Taxonomy" id="83331"/>
    <lineage>
        <taxon>Bacteria</taxon>
        <taxon>Bacillati</taxon>
        <taxon>Actinomycetota</taxon>
        <taxon>Actinomycetes</taxon>
        <taxon>Mycobacteriales</taxon>
        <taxon>Mycobacteriaceae</taxon>
        <taxon>Mycobacterium</taxon>
        <taxon>Mycobacterium tuberculosis complex</taxon>
    </lineage>
</organism>
<gene>
    <name evidence="1" type="primary">rimP</name>
    <name type="ordered locus">MT2908</name>
</gene>
<reference key="1">
    <citation type="journal article" date="2002" name="J. Bacteriol.">
        <title>Whole-genome comparison of Mycobacterium tuberculosis clinical and laboratory strains.</title>
        <authorList>
            <person name="Fleischmann R.D."/>
            <person name="Alland D."/>
            <person name="Eisen J.A."/>
            <person name="Carpenter L."/>
            <person name="White O."/>
            <person name="Peterson J.D."/>
            <person name="DeBoy R.T."/>
            <person name="Dodson R.J."/>
            <person name="Gwinn M.L."/>
            <person name="Haft D.H."/>
            <person name="Hickey E.K."/>
            <person name="Kolonay J.F."/>
            <person name="Nelson W.C."/>
            <person name="Umayam L.A."/>
            <person name="Ermolaeva M.D."/>
            <person name="Salzberg S.L."/>
            <person name="Delcher A."/>
            <person name="Utterback T.R."/>
            <person name="Weidman J.F."/>
            <person name="Khouri H.M."/>
            <person name="Gill J."/>
            <person name="Mikula A."/>
            <person name="Bishai W."/>
            <person name="Jacobs W.R. Jr."/>
            <person name="Venter J.C."/>
            <person name="Fraser C.M."/>
        </authorList>
    </citation>
    <scope>NUCLEOTIDE SEQUENCE [LARGE SCALE GENOMIC DNA]</scope>
    <source>
        <strain>CDC 1551 / Oshkosh</strain>
    </source>
</reference>
<proteinExistence type="inferred from homology"/>
<protein>
    <recommendedName>
        <fullName evidence="1">Ribosome maturation factor RimP</fullName>
    </recommendedName>
</protein>
<accession>P9WH16</accession>
<accession>L0TDI5</accession>
<accession>O05817</accession>
<accession>P67214</accession>